<reference key="1">
    <citation type="journal article" date="1996" name="Nucleic Acids Res.">
        <title>Complete sequence analysis of the genome of the bacterium Mycoplasma pneumoniae.</title>
        <authorList>
            <person name="Himmelreich R."/>
            <person name="Hilbert H."/>
            <person name="Plagens H."/>
            <person name="Pirkl E."/>
            <person name="Li B.-C."/>
            <person name="Herrmann R."/>
        </authorList>
    </citation>
    <scope>NUCLEOTIDE SEQUENCE [LARGE SCALE GENOMIC DNA]</scope>
    <source>
        <strain>ATCC 29342 / M129 / Subtype 1</strain>
    </source>
</reference>
<name>Y087_MYCPN</name>
<dbReference type="EMBL" id="U00089">
    <property type="protein sequence ID" value="AAB95716.1"/>
    <property type="molecule type" value="Genomic_DNA"/>
</dbReference>
<dbReference type="PIR" id="S73394">
    <property type="entry name" value="S73394"/>
</dbReference>
<dbReference type="RefSeq" id="NP_109775.1">
    <property type="nucleotide sequence ID" value="NC_000912.1"/>
</dbReference>
<dbReference type="SMR" id="P75606"/>
<dbReference type="EnsemblBacteria" id="AAB95716">
    <property type="protein sequence ID" value="AAB95716"/>
    <property type="gene ID" value="MPN_087"/>
</dbReference>
<dbReference type="KEGG" id="mpn:MPN_087"/>
<dbReference type="HOGENOM" id="CLU_1738507_0_0_14"/>
<dbReference type="BioCyc" id="MPNE272634:G1GJ3-140-MONOMER"/>
<dbReference type="Proteomes" id="UP000000808">
    <property type="component" value="Chromosome"/>
</dbReference>
<dbReference type="GO" id="GO:0005886">
    <property type="term" value="C:plasma membrane"/>
    <property type="evidence" value="ECO:0007669"/>
    <property type="project" value="UniProtKB-SubCell"/>
</dbReference>
<keyword id="KW-1003">Cell membrane</keyword>
<keyword id="KW-0472">Membrane</keyword>
<keyword id="KW-1185">Reference proteome</keyword>
<keyword id="KW-0812">Transmembrane</keyword>
<keyword id="KW-1133">Transmembrane helix</keyword>
<proteinExistence type="predicted"/>
<organism>
    <name type="scientific">Mycoplasma pneumoniae (strain ATCC 29342 / M129 / Subtype 1)</name>
    <name type="common">Mycoplasmoides pneumoniae</name>
    <dbReference type="NCBI Taxonomy" id="272634"/>
    <lineage>
        <taxon>Bacteria</taxon>
        <taxon>Bacillati</taxon>
        <taxon>Mycoplasmatota</taxon>
        <taxon>Mycoplasmoidales</taxon>
        <taxon>Mycoplasmoidaceae</taxon>
        <taxon>Mycoplasmoides</taxon>
    </lineage>
</organism>
<feature type="chain" id="PRO_0000210638" description="Uncharacterized protein MPN_087">
    <location>
        <begin position="1"/>
        <end position="150"/>
    </location>
</feature>
<feature type="transmembrane region" description="Helical" evidence="1">
    <location>
        <begin position="48"/>
        <end position="68"/>
    </location>
</feature>
<feature type="transmembrane region" description="Helical" evidence="1">
    <location>
        <begin position="89"/>
        <end position="109"/>
    </location>
</feature>
<feature type="transmembrane region" description="Helical" evidence="1">
    <location>
        <begin position="123"/>
        <end position="143"/>
    </location>
</feature>
<comment type="subcellular location">
    <subcellularLocation>
        <location evidence="2">Cell membrane</location>
        <topology evidence="2">Multi-pass membrane protein</topology>
    </subcellularLocation>
</comment>
<comment type="similarity">
    <text evidence="2">To M.pneumoniae MPN_085 central region.</text>
</comment>
<evidence type="ECO:0000255" key="1"/>
<evidence type="ECO:0000305" key="2"/>
<sequence>MTLIYVPTTLNLIDSFNYSESIYKWGDYFFRHLESRDFYFSNFGFISLFLLLFVIPTITLTTLGCFLFSYLRFTDINKIKIQIYSLLTVFIFIDVFGLVVSVLFGYLLPLAFDSLPFSVNLTREVFLSLAMIVIFANSVIFTLRQKRNID</sequence>
<accession>P75606</accession>
<gene>
    <name type="ordered locus">MPN_087</name>
    <name type="ORF">MP068</name>
    <name type="ORF">R02_orf150</name>
</gene>
<protein>
    <recommendedName>
        <fullName>Uncharacterized protein MPN_087</fullName>
    </recommendedName>
</protein>